<reference key="1">
    <citation type="journal article" date="2005" name="J. Bacteriol.">
        <title>Insights on evolution of virulence and resistance from the complete genome analysis of an early methicillin-resistant Staphylococcus aureus strain and a biofilm-producing methicillin-resistant Staphylococcus epidermidis strain.</title>
        <authorList>
            <person name="Gill S.R."/>
            <person name="Fouts D.E."/>
            <person name="Archer G.L."/>
            <person name="Mongodin E.F."/>
            <person name="DeBoy R.T."/>
            <person name="Ravel J."/>
            <person name="Paulsen I.T."/>
            <person name="Kolonay J.F."/>
            <person name="Brinkac L.M."/>
            <person name="Beanan M.J."/>
            <person name="Dodson R.J."/>
            <person name="Daugherty S.C."/>
            <person name="Madupu R."/>
            <person name="Angiuoli S.V."/>
            <person name="Durkin A.S."/>
            <person name="Haft D.H."/>
            <person name="Vamathevan J.J."/>
            <person name="Khouri H."/>
            <person name="Utterback T.R."/>
            <person name="Lee C."/>
            <person name="Dimitrov G."/>
            <person name="Jiang L."/>
            <person name="Qin H."/>
            <person name="Weidman J."/>
            <person name="Tran K."/>
            <person name="Kang K.H."/>
            <person name="Hance I.R."/>
            <person name="Nelson K.E."/>
            <person name="Fraser C.M."/>
        </authorList>
    </citation>
    <scope>NUCLEOTIDE SEQUENCE [LARGE SCALE GENOMIC DNA]</scope>
    <source>
        <strain>COL</strain>
    </source>
</reference>
<comment type="function">
    <text evidence="3">Member of the two-component regulatory system WalK/WalR that regulates genes involved in cell wall metabolism, virulence regulation, biofilm production, oxidative stress resistance and antibiotic resistance via direct or indirect regulation of autolysins. Functions as a sensor protein kinase which is autophosphorylated at a histidine residue in the dimerization domain and transfers its phosphate group to the conserved aspartic acid residue in the regulatory domain of WalR. In turn, WalR binds to the upstream promoter regions of the target genes to positively and negatively regulate their expression.</text>
</comment>
<comment type="catalytic activity">
    <reaction evidence="3">
        <text>ATP + protein L-histidine = ADP + protein N-phospho-L-histidine.</text>
        <dbReference type="EC" id="2.7.13.3"/>
    </reaction>
</comment>
<comment type="activity regulation">
    <text evidence="3">By zinc. Zinc-binding negatively regulates WalK kinase activity and thus autophosphorylation.</text>
</comment>
<comment type="subunit">
    <text evidence="2">Forms homodimers. Forms homooligomers.</text>
</comment>
<comment type="subcellular location">
    <subcellularLocation>
        <location evidence="9">Cell membrane</location>
        <topology evidence="4">Multi-pass membrane protein</topology>
    </subcellularLocation>
</comment>
<comment type="PTM">
    <text evidence="3">Autophosphorylated.</text>
</comment>
<protein>
    <recommendedName>
        <fullName evidence="9">Sensor protein kinase WalK</fullName>
        <ecNumber evidence="1">2.7.13.3</ecNumber>
    </recommendedName>
</protein>
<evidence type="ECO:0000250" key="1">
    <source>
        <dbReference type="UniProtKB" id="O34206"/>
    </source>
</evidence>
<evidence type="ECO:0000250" key="2">
    <source>
        <dbReference type="UniProtKB" id="Q2G2U4"/>
    </source>
</evidence>
<evidence type="ECO:0000250" key="3">
    <source>
        <dbReference type="UniProtKB" id="Q9RDT3"/>
    </source>
</evidence>
<evidence type="ECO:0000255" key="4"/>
<evidence type="ECO:0000255" key="5">
    <source>
        <dbReference type="PROSITE-ProRule" id="PRU00102"/>
    </source>
</evidence>
<evidence type="ECO:0000255" key="6">
    <source>
        <dbReference type="PROSITE-ProRule" id="PRU00107"/>
    </source>
</evidence>
<evidence type="ECO:0000255" key="7">
    <source>
        <dbReference type="PROSITE-ProRule" id="PRU00140"/>
    </source>
</evidence>
<evidence type="ECO:0000255" key="8">
    <source>
        <dbReference type="PROSITE-ProRule" id="PRU00141"/>
    </source>
</evidence>
<evidence type="ECO:0000305" key="9"/>
<sequence>MKWLKQLQSLHTKLVIVYVLLIIIGMQIIGLYFTNNLEKELLDNFKKNITQYAKQLEISIEKVYDEKGSVNAQKDIQNLLSEYANRQEIGEIRFIDKDQIIIATTKQSNRSLINQKANDSSVQKALSLGQSNDHLILKDYGGGKDRVWVYNIPVKVDKKVIGNIYIESKINDVYNQLNNINQIFIVGTAISLLITVILGFFIARTITKPITDMRNQTVEMSRGNYTQRVKIYGNDEIGELALAFNNLSKRVQEAQANTESEKRRLDSVITHMSDGIIATDRRGRIRIVNDMALKMLGMAKEDIIGYYMLSVLSLEDEFKLEEIQENNDSFLLDLNEEEGLIARVNFSTIVQETGFVTGYIAVLHDVTEQQQVERERREFVANVSHELRTPLTSMNSYIEALEEGAWKDEELAPQFLSVTREETERMIRLVNDLLQLSKMDNESDQINKEIIDFNMFINKIINRHEMSAKDTTFIRDIPKKTIFTEFDPDKMTQVFDNVITNAMKYSRGDKRVEFHVKQNPLYNRMTIRIKDNGIGIPINKVDKIFDRFYRVDKARTRKMGGTGLGLAISKEIVEAHNGRIWANSVEGQGTSIFITLPCEVIEDGDWDE</sequence>
<organism>
    <name type="scientific">Staphylococcus aureus (strain COL)</name>
    <dbReference type="NCBI Taxonomy" id="93062"/>
    <lineage>
        <taxon>Bacteria</taxon>
        <taxon>Bacillati</taxon>
        <taxon>Bacillota</taxon>
        <taxon>Bacilli</taxon>
        <taxon>Bacillales</taxon>
        <taxon>Staphylococcaceae</taxon>
        <taxon>Staphylococcus</taxon>
    </lineage>
</organism>
<dbReference type="EC" id="2.7.13.3" evidence="1"/>
<dbReference type="EMBL" id="CP000046">
    <property type="protein sequence ID" value="AAW37408.1"/>
    <property type="molecule type" value="Genomic_DNA"/>
</dbReference>
<dbReference type="RefSeq" id="WP_000871607.1">
    <property type="nucleotide sequence ID" value="NZ_JBGOFO010000001.1"/>
</dbReference>
<dbReference type="SMR" id="Q5HJX6"/>
<dbReference type="KEGG" id="sac:SACOL0020"/>
<dbReference type="HOGENOM" id="CLU_000445_89_2_9"/>
<dbReference type="Proteomes" id="UP000000530">
    <property type="component" value="Chromosome"/>
</dbReference>
<dbReference type="GO" id="GO:0005886">
    <property type="term" value="C:plasma membrane"/>
    <property type="evidence" value="ECO:0007669"/>
    <property type="project" value="UniProtKB-SubCell"/>
</dbReference>
<dbReference type="GO" id="GO:0005524">
    <property type="term" value="F:ATP binding"/>
    <property type="evidence" value="ECO:0007669"/>
    <property type="project" value="UniProtKB-KW"/>
</dbReference>
<dbReference type="GO" id="GO:0046872">
    <property type="term" value="F:metal ion binding"/>
    <property type="evidence" value="ECO:0007669"/>
    <property type="project" value="UniProtKB-KW"/>
</dbReference>
<dbReference type="GO" id="GO:0000156">
    <property type="term" value="F:phosphorelay response regulator activity"/>
    <property type="evidence" value="ECO:0007669"/>
    <property type="project" value="TreeGrafter"/>
</dbReference>
<dbReference type="GO" id="GO:0000155">
    <property type="term" value="F:phosphorelay sensor kinase activity"/>
    <property type="evidence" value="ECO:0007669"/>
    <property type="project" value="InterPro"/>
</dbReference>
<dbReference type="GO" id="GO:0030295">
    <property type="term" value="F:protein kinase activator activity"/>
    <property type="evidence" value="ECO:0007669"/>
    <property type="project" value="TreeGrafter"/>
</dbReference>
<dbReference type="GO" id="GO:0007234">
    <property type="term" value="P:osmosensory signaling via phosphorelay pathway"/>
    <property type="evidence" value="ECO:0007669"/>
    <property type="project" value="TreeGrafter"/>
</dbReference>
<dbReference type="CDD" id="cd06225">
    <property type="entry name" value="HAMP"/>
    <property type="match status" value="1"/>
</dbReference>
<dbReference type="CDD" id="cd00075">
    <property type="entry name" value="HATPase"/>
    <property type="match status" value="1"/>
</dbReference>
<dbReference type="CDD" id="cd00082">
    <property type="entry name" value="HisKA"/>
    <property type="match status" value="1"/>
</dbReference>
<dbReference type="CDD" id="cd00130">
    <property type="entry name" value="PAS"/>
    <property type="match status" value="1"/>
</dbReference>
<dbReference type="FunFam" id="1.10.8.500:FF:000001">
    <property type="entry name" value="Cell wall metabolism sensor histidine kinase"/>
    <property type="match status" value="1"/>
</dbReference>
<dbReference type="FunFam" id="3.30.450.20:FF:000037">
    <property type="entry name" value="Cell wall metabolism sensor histidine kinase"/>
    <property type="match status" value="1"/>
</dbReference>
<dbReference type="FunFam" id="3.30.565.10:FF:000006">
    <property type="entry name" value="Sensor histidine kinase WalK"/>
    <property type="match status" value="1"/>
</dbReference>
<dbReference type="FunFam" id="1.10.287.130:FF:000001">
    <property type="entry name" value="Two-component sensor histidine kinase"/>
    <property type="match status" value="1"/>
</dbReference>
<dbReference type="Gene3D" id="1.10.287.130">
    <property type="match status" value="1"/>
</dbReference>
<dbReference type="Gene3D" id="1.10.8.500">
    <property type="entry name" value="HAMP domain in histidine kinase"/>
    <property type="match status" value="1"/>
</dbReference>
<dbReference type="Gene3D" id="3.30.565.10">
    <property type="entry name" value="Histidine kinase-like ATPase, C-terminal domain"/>
    <property type="match status" value="1"/>
</dbReference>
<dbReference type="Gene3D" id="3.30.450.20">
    <property type="entry name" value="PAS domain"/>
    <property type="match status" value="2"/>
</dbReference>
<dbReference type="InterPro" id="IPR003660">
    <property type="entry name" value="HAMP_dom"/>
</dbReference>
<dbReference type="InterPro" id="IPR036890">
    <property type="entry name" value="HATPase_C_sf"/>
</dbReference>
<dbReference type="InterPro" id="IPR005467">
    <property type="entry name" value="His_kinase_dom"/>
</dbReference>
<dbReference type="InterPro" id="IPR003661">
    <property type="entry name" value="HisK_dim/P_dom"/>
</dbReference>
<dbReference type="InterPro" id="IPR036097">
    <property type="entry name" value="HisK_dim/P_sf"/>
</dbReference>
<dbReference type="InterPro" id="IPR052545">
    <property type="entry name" value="Light-responsive_reg"/>
</dbReference>
<dbReference type="InterPro" id="IPR000014">
    <property type="entry name" value="PAS"/>
</dbReference>
<dbReference type="InterPro" id="IPR000700">
    <property type="entry name" value="PAS-assoc_C"/>
</dbReference>
<dbReference type="InterPro" id="IPR035965">
    <property type="entry name" value="PAS-like_dom_sf"/>
</dbReference>
<dbReference type="InterPro" id="IPR049814">
    <property type="entry name" value="Resp_reg_WalK"/>
</dbReference>
<dbReference type="InterPro" id="IPR029151">
    <property type="entry name" value="Sensor-like_sf"/>
</dbReference>
<dbReference type="InterPro" id="IPR004358">
    <property type="entry name" value="Sig_transdc_His_kin-like_C"/>
</dbReference>
<dbReference type="NCBIfam" id="NF033092">
    <property type="entry name" value="HK_WalK"/>
    <property type="match status" value="1"/>
</dbReference>
<dbReference type="NCBIfam" id="TIGR00229">
    <property type="entry name" value="sensory_box"/>
    <property type="match status" value="1"/>
</dbReference>
<dbReference type="PANTHER" id="PTHR42878:SF7">
    <property type="entry name" value="SENSOR HISTIDINE KINASE GLRK"/>
    <property type="match status" value="1"/>
</dbReference>
<dbReference type="PANTHER" id="PTHR42878">
    <property type="entry name" value="TWO-COMPONENT HISTIDINE KINASE"/>
    <property type="match status" value="1"/>
</dbReference>
<dbReference type="Pfam" id="PF23846">
    <property type="entry name" value="Cache_WalK"/>
    <property type="match status" value="1"/>
</dbReference>
<dbReference type="Pfam" id="PF00672">
    <property type="entry name" value="HAMP"/>
    <property type="match status" value="1"/>
</dbReference>
<dbReference type="Pfam" id="PF02518">
    <property type="entry name" value="HATPase_c"/>
    <property type="match status" value="1"/>
</dbReference>
<dbReference type="Pfam" id="PF00512">
    <property type="entry name" value="HisKA"/>
    <property type="match status" value="1"/>
</dbReference>
<dbReference type="Pfam" id="PF13426">
    <property type="entry name" value="PAS_9"/>
    <property type="match status" value="1"/>
</dbReference>
<dbReference type="PRINTS" id="PR00344">
    <property type="entry name" value="BCTRLSENSOR"/>
</dbReference>
<dbReference type="SMART" id="SM00304">
    <property type="entry name" value="HAMP"/>
    <property type="match status" value="1"/>
</dbReference>
<dbReference type="SMART" id="SM00387">
    <property type="entry name" value="HATPase_c"/>
    <property type="match status" value="1"/>
</dbReference>
<dbReference type="SMART" id="SM00388">
    <property type="entry name" value="HisKA"/>
    <property type="match status" value="1"/>
</dbReference>
<dbReference type="SMART" id="SM00091">
    <property type="entry name" value="PAS"/>
    <property type="match status" value="1"/>
</dbReference>
<dbReference type="SUPFAM" id="SSF55874">
    <property type="entry name" value="ATPase domain of HSP90 chaperone/DNA topoisomerase II/histidine kinase"/>
    <property type="match status" value="1"/>
</dbReference>
<dbReference type="SUPFAM" id="SSF158472">
    <property type="entry name" value="HAMP domain-like"/>
    <property type="match status" value="1"/>
</dbReference>
<dbReference type="SUPFAM" id="SSF47384">
    <property type="entry name" value="Homodimeric domain of signal transducing histidine kinase"/>
    <property type="match status" value="1"/>
</dbReference>
<dbReference type="SUPFAM" id="SSF55785">
    <property type="entry name" value="PYP-like sensor domain (PAS domain)"/>
    <property type="match status" value="1"/>
</dbReference>
<dbReference type="SUPFAM" id="SSF103190">
    <property type="entry name" value="Sensory domain-like"/>
    <property type="match status" value="1"/>
</dbReference>
<dbReference type="PROSITE" id="PS50885">
    <property type="entry name" value="HAMP"/>
    <property type="match status" value="1"/>
</dbReference>
<dbReference type="PROSITE" id="PS50109">
    <property type="entry name" value="HIS_KIN"/>
    <property type="match status" value="1"/>
</dbReference>
<dbReference type="PROSITE" id="PS50113">
    <property type="entry name" value="PAC"/>
    <property type="match status" value="1"/>
</dbReference>
<dbReference type="PROSITE" id="PS50112">
    <property type="entry name" value="PAS"/>
    <property type="match status" value="1"/>
</dbReference>
<proteinExistence type="inferred from homology"/>
<gene>
    <name type="primary">walK</name>
    <name type="synonym">yycG</name>
    <name type="ordered locus">SACOL0020</name>
</gene>
<name>WALK_STAAC</name>
<keyword id="KW-0067">ATP-binding</keyword>
<keyword id="KW-1003">Cell membrane</keyword>
<keyword id="KW-0418">Kinase</keyword>
<keyword id="KW-0472">Membrane</keyword>
<keyword id="KW-0479">Metal-binding</keyword>
<keyword id="KW-0547">Nucleotide-binding</keyword>
<keyword id="KW-0597">Phosphoprotein</keyword>
<keyword id="KW-0808">Transferase</keyword>
<keyword id="KW-0812">Transmembrane</keyword>
<keyword id="KW-1133">Transmembrane helix</keyword>
<keyword id="KW-0902">Two-component regulatory system</keyword>
<keyword id="KW-0862">Zinc</keyword>
<feature type="chain" id="PRO_0000353052" description="Sensor protein kinase WalK">
    <location>
        <begin position="1"/>
        <end position="608"/>
    </location>
</feature>
<feature type="transmembrane region" description="Helical" evidence="4">
    <location>
        <begin position="14"/>
        <end position="34"/>
    </location>
</feature>
<feature type="transmembrane region" description="Helical" evidence="4">
    <location>
        <begin position="183"/>
        <end position="203"/>
    </location>
</feature>
<feature type="domain" description="HAMP" evidence="5">
    <location>
        <begin position="204"/>
        <end position="256"/>
    </location>
</feature>
<feature type="domain" description="PAS" evidence="7">
    <location>
        <begin position="261"/>
        <end position="331"/>
    </location>
</feature>
<feature type="domain" description="PAC" evidence="8">
    <location>
        <begin position="314"/>
        <end position="378"/>
    </location>
</feature>
<feature type="domain" description="Histidine kinase" evidence="6">
    <location>
        <begin position="382"/>
        <end position="600"/>
    </location>
</feature>
<feature type="binding site" evidence="3">
    <location>
        <position position="271"/>
    </location>
    <ligand>
        <name>Zn(2+)</name>
        <dbReference type="ChEBI" id="CHEBI:29105"/>
    </ligand>
</feature>
<feature type="binding site" evidence="3">
    <location>
        <position position="274"/>
    </location>
    <ligand>
        <name>Zn(2+)</name>
        <dbReference type="ChEBI" id="CHEBI:29105"/>
    </ligand>
</feature>
<feature type="binding site" evidence="3">
    <location>
        <position position="364"/>
    </location>
    <ligand>
        <name>Zn(2+)</name>
        <dbReference type="ChEBI" id="CHEBI:29105"/>
    </ligand>
</feature>
<feature type="binding site" evidence="3">
    <location>
        <position position="368"/>
    </location>
    <ligand>
        <name>Zn(2+)</name>
        <dbReference type="ChEBI" id="CHEBI:29105"/>
    </ligand>
</feature>
<feature type="modified residue" description="Phosphohistidine; by autocatalysis" evidence="6">
    <location>
        <position position="385"/>
    </location>
</feature>
<accession>Q5HJX6</accession>